<organism>
    <name type="scientific">Vibrio atlanticus (strain LGP32)</name>
    <name type="common">Vibrio splendidus (strain Mel32)</name>
    <dbReference type="NCBI Taxonomy" id="575788"/>
    <lineage>
        <taxon>Bacteria</taxon>
        <taxon>Pseudomonadati</taxon>
        <taxon>Pseudomonadota</taxon>
        <taxon>Gammaproteobacteria</taxon>
        <taxon>Vibrionales</taxon>
        <taxon>Vibrionaceae</taxon>
        <taxon>Vibrio</taxon>
    </lineage>
</organism>
<proteinExistence type="inferred from homology"/>
<keyword id="KW-0408">Iron</keyword>
<keyword id="KW-0479">Metal-binding</keyword>
<dbReference type="EMBL" id="FM954972">
    <property type="protein sequence ID" value="CAV20328.1"/>
    <property type="molecule type" value="Genomic_DNA"/>
</dbReference>
<dbReference type="SMR" id="B7VMD7"/>
<dbReference type="STRING" id="575788.VS_3050"/>
<dbReference type="KEGG" id="vsp:VS_3050"/>
<dbReference type="eggNOG" id="COG1965">
    <property type="taxonomic scope" value="Bacteria"/>
</dbReference>
<dbReference type="HOGENOM" id="CLU_080880_3_0_6"/>
<dbReference type="Proteomes" id="UP000009100">
    <property type="component" value="Chromosome 1"/>
</dbReference>
<dbReference type="GO" id="GO:0005829">
    <property type="term" value="C:cytosol"/>
    <property type="evidence" value="ECO:0007669"/>
    <property type="project" value="TreeGrafter"/>
</dbReference>
<dbReference type="GO" id="GO:0008199">
    <property type="term" value="F:ferric iron binding"/>
    <property type="evidence" value="ECO:0007669"/>
    <property type="project" value="InterPro"/>
</dbReference>
<dbReference type="GO" id="GO:0008198">
    <property type="term" value="F:ferrous iron binding"/>
    <property type="evidence" value="ECO:0007669"/>
    <property type="project" value="TreeGrafter"/>
</dbReference>
<dbReference type="GO" id="GO:0016226">
    <property type="term" value="P:iron-sulfur cluster assembly"/>
    <property type="evidence" value="ECO:0007669"/>
    <property type="project" value="UniProtKB-UniRule"/>
</dbReference>
<dbReference type="CDD" id="cd00503">
    <property type="entry name" value="Frataxin"/>
    <property type="match status" value="1"/>
</dbReference>
<dbReference type="Gene3D" id="3.30.920.10">
    <property type="entry name" value="Frataxin/CyaY"/>
    <property type="match status" value="1"/>
</dbReference>
<dbReference type="HAMAP" id="MF_00142">
    <property type="entry name" value="CyaY"/>
    <property type="match status" value="1"/>
</dbReference>
<dbReference type="InterPro" id="IPR047584">
    <property type="entry name" value="CyaY"/>
</dbReference>
<dbReference type="InterPro" id="IPR002908">
    <property type="entry name" value="Frataxin/CyaY"/>
</dbReference>
<dbReference type="InterPro" id="IPR036524">
    <property type="entry name" value="Frataxin/CyaY_sf"/>
</dbReference>
<dbReference type="InterPro" id="IPR020895">
    <property type="entry name" value="Frataxin_CS"/>
</dbReference>
<dbReference type="NCBIfam" id="TIGR03421">
    <property type="entry name" value="FeS_CyaY"/>
    <property type="match status" value="1"/>
</dbReference>
<dbReference type="PANTHER" id="PTHR16821">
    <property type="entry name" value="FRATAXIN"/>
    <property type="match status" value="1"/>
</dbReference>
<dbReference type="PANTHER" id="PTHR16821:SF2">
    <property type="entry name" value="FRATAXIN, MITOCHONDRIAL"/>
    <property type="match status" value="1"/>
</dbReference>
<dbReference type="Pfam" id="PF01491">
    <property type="entry name" value="Frataxin_Cyay"/>
    <property type="match status" value="1"/>
</dbReference>
<dbReference type="SMART" id="SM01219">
    <property type="entry name" value="Frataxin_Cyay"/>
    <property type="match status" value="1"/>
</dbReference>
<dbReference type="SUPFAM" id="SSF55387">
    <property type="entry name" value="Frataxin/Nqo15-like"/>
    <property type="match status" value="1"/>
</dbReference>
<dbReference type="PROSITE" id="PS01344">
    <property type="entry name" value="FRATAXIN_1"/>
    <property type="match status" value="1"/>
</dbReference>
<dbReference type="PROSITE" id="PS50810">
    <property type="entry name" value="FRATAXIN_2"/>
    <property type="match status" value="1"/>
</dbReference>
<feature type="chain" id="PRO_1000123049" description="Iron-sulfur cluster assembly protein CyaY">
    <location>
        <begin position="1"/>
        <end position="104"/>
    </location>
</feature>
<reference key="1">
    <citation type="submission" date="2009-02" db="EMBL/GenBank/DDBJ databases">
        <title>Vibrio splendidus str. LGP32 complete genome.</title>
        <authorList>
            <person name="Mazel D."/>
            <person name="Le Roux F."/>
        </authorList>
    </citation>
    <scope>NUCLEOTIDE SEQUENCE [LARGE SCALE GENOMIC DNA]</scope>
    <source>
        <strain>LGP32</strain>
    </source>
</reference>
<accession>B7VMD7</accession>
<protein>
    <recommendedName>
        <fullName evidence="1">Iron-sulfur cluster assembly protein CyaY</fullName>
    </recommendedName>
</protein>
<comment type="function">
    <text evidence="1">Involved in iron-sulfur (Fe-S) cluster assembly. May act as a regulator of Fe-S biogenesis.</text>
</comment>
<comment type="similarity">
    <text evidence="1">Belongs to the frataxin family.</text>
</comment>
<name>CYAY_VIBA3</name>
<gene>
    <name evidence="1" type="primary">cyaY</name>
    <name type="ordered locus">VS_3050</name>
</gene>
<evidence type="ECO:0000255" key="1">
    <source>
        <dbReference type="HAMAP-Rule" id="MF_00142"/>
    </source>
</evidence>
<sequence length="104" mass="12245">MNETEFHKLVDIQMQNIEEAIDESEADIDYEVTGNVMTLEFENRSQIIINRQEPMREIWLASKSGGFHFKLVDDKWTCSKTGMALFEMVKEECEKHADEEINWV</sequence>